<protein>
    <recommendedName>
        <fullName evidence="1">Lon protease homolog, mitochondrial</fullName>
        <ecNumber evidence="1">3.4.21.53</ecNumber>
    </recommendedName>
</protein>
<gene>
    <name type="primary">pim1</name>
    <name type="ORF">NCU05261</name>
</gene>
<reference key="1">
    <citation type="journal article" date="2003" name="Nature">
        <title>The genome sequence of the filamentous fungus Neurospora crassa.</title>
        <authorList>
            <person name="Galagan J.E."/>
            <person name="Calvo S.E."/>
            <person name="Borkovich K.A."/>
            <person name="Selker E.U."/>
            <person name="Read N.D."/>
            <person name="Jaffe D.B."/>
            <person name="FitzHugh W."/>
            <person name="Ma L.-J."/>
            <person name="Smirnov S."/>
            <person name="Purcell S."/>
            <person name="Rehman B."/>
            <person name="Elkins T."/>
            <person name="Engels R."/>
            <person name="Wang S."/>
            <person name="Nielsen C.B."/>
            <person name="Butler J."/>
            <person name="Endrizzi M."/>
            <person name="Qui D."/>
            <person name="Ianakiev P."/>
            <person name="Bell-Pedersen D."/>
            <person name="Nelson M.A."/>
            <person name="Werner-Washburne M."/>
            <person name="Selitrennikoff C.P."/>
            <person name="Kinsey J.A."/>
            <person name="Braun E.L."/>
            <person name="Zelter A."/>
            <person name="Schulte U."/>
            <person name="Kothe G.O."/>
            <person name="Jedd G."/>
            <person name="Mewes H.-W."/>
            <person name="Staben C."/>
            <person name="Marcotte E."/>
            <person name="Greenberg D."/>
            <person name="Roy A."/>
            <person name="Foley K."/>
            <person name="Naylor J."/>
            <person name="Stange-Thomann N."/>
            <person name="Barrett R."/>
            <person name="Gnerre S."/>
            <person name="Kamal M."/>
            <person name="Kamvysselis M."/>
            <person name="Mauceli E.W."/>
            <person name="Bielke C."/>
            <person name="Rudd S."/>
            <person name="Frishman D."/>
            <person name="Krystofova S."/>
            <person name="Rasmussen C."/>
            <person name="Metzenberg R.L."/>
            <person name="Perkins D.D."/>
            <person name="Kroken S."/>
            <person name="Cogoni C."/>
            <person name="Macino G."/>
            <person name="Catcheside D.E.A."/>
            <person name="Li W."/>
            <person name="Pratt R.J."/>
            <person name="Osmani S.A."/>
            <person name="DeSouza C.P.C."/>
            <person name="Glass N.L."/>
            <person name="Orbach M.J."/>
            <person name="Berglund J.A."/>
            <person name="Voelker R."/>
            <person name="Yarden O."/>
            <person name="Plamann M."/>
            <person name="Seiler S."/>
            <person name="Dunlap J.C."/>
            <person name="Radford A."/>
            <person name="Aramayo R."/>
            <person name="Natvig D.O."/>
            <person name="Alex L.A."/>
            <person name="Mannhaupt G."/>
            <person name="Ebbole D.J."/>
            <person name="Freitag M."/>
            <person name="Paulsen I."/>
            <person name="Sachs M.S."/>
            <person name="Lander E.S."/>
            <person name="Nusbaum C."/>
            <person name="Birren B.W."/>
        </authorList>
    </citation>
    <scope>NUCLEOTIDE SEQUENCE [LARGE SCALE GENOMIC DNA]</scope>
    <source>
        <strain>ATCC 24698 / 74-OR23-1A / CBS 708.71 / DSM 1257 / FGSC 987</strain>
    </source>
</reference>
<comment type="function">
    <text evidence="1">ATP-dependent serine protease that mediates the selective degradation of misfolded, unassembled or oxidatively damaged polypeptides as well as certain short-lived regulatory proteins in the mitochondrial matrix. May also have a chaperone function in the assembly of inner membrane protein complexes. Participates in the regulation of mitochondrial gene expression and in the maintenance of the integrity of the mitochondrial genome. Binds to mitochondrial DNA in a site-specific manner.</text>
</comment>
<comment type="catalytic activity">
    <reaction evidence="1">
        <text>Hydrolysis of proteins in presence of ATP.</text>
        <dbReference type="EC" id="3.4.21.53"/>
    </reaction>
</comment>
<comment type="subunit">
    <text evidence="1">Homohexamer or homoheptamer. Organized in a ring with a central cavity.</text>
</comment>
<comment type="subcellular location">
    <subcellularLocation>
        <location evidence="1">Mitochondrion matrix</location>
    </subcellularLocation>
</comment>
<comment type="similarity">
    <text evidence="1">Belongs to the peptidase S16 family.</text>
</comment>
<keyword id="KW-0067">ATP-binding</keyword>
<keyword id="KW-0238">DNA-binding</keyword>
<keyword id="KW-0378">Hydrolase</keyword>
<keyword id="KW-0496">Mitochondrion</keyword>
<keyword id="KW-0547">Nucleotide-binding</keyword>
<keyword id="KW-0645">Protease</keyword>
<keyword id="KW-1185">Reference proteome</keyword>
<keyword id="KW-0720">Serine protease</keyword>
<keyword id="KW-0809">Transit peptide</keyword>
<sequence>MLSRQRIPRILASRTSLAHSIRSFTSTTSSIRPVAAAGQHAVTRPRHERPTNLSSFSTYTALGKKNDKGFFDNSIEPLSEEERKANVEHAEAEAKEAESKQAKSKSSTSDAPPPAPEDGKAGAAGGSSAGSGSGADGGSGDGGKRGRKPGDKALAKPVVPEIYPQVMAIPIAKRPLFPGFYKAITIKDPNVAAAITEMIKRGQPYVGAFLFKDENADDDVIRNRDDVYDVGVFAQITSAFPMNNQNGEGASLTAILYPHRRIKLSELIPPGSPEAASIDGAKEGAAPEPVPEPIPKVTDESEQKGDVVASFEESAVTPRPEPSQKPYEPTSFLKKYPVSLVNVENLTEEPYDPKSQVIRAVTNEIVNVFKEVASMNSLFRDQISTFSMSQSTGNVMAEPAKLADFAAAVSAGEPAELQEVLSSLNVEERMHKALLVLKKEHVNAQLQSKITKDVEQKITKRQREYWLMEQMKGIRRELGIESDGKDKLVEKFKELADKLAMPEAVRKVFDDELNKLAHLEPAASEFNVTRNYLDWLTNIPWGQSSAENFDILNAVKVLDEDHYGLKDVKDRILEFIAVGKLRGTVEGKILCFVGPPGVGKTSIGKSIARALGRQYYRFSVGGLTDVAEIKGHRRTYVGALPGRVIQALKKCKTENPLILIDEIDKIGRGYQGDPSSALLELLDPEQNGSFLDHYLDVPVDLSKVLFVCTANLTDTIPRPLLDRMEVIRLSGYVADEKMAIAEKYLAPQAQEMAGLKGVDVQLTKDAIEELNKSYCRESGVRNLKKKIEQVYRKSALKIVQDLGEQALPESEALTEEGKAAQEETEKKKSEEAASGETSSPKAATEASEKETTEKPRVAMKIPEGVHVVINKDNLKDYVGPPIFTSDRLYDVTPPGVTMGLAWTSMGGAAMYVESILQSALTSKSAPSLEITGNLKTVMKESSAIAYSYAKAVMAKDFPKNRFFDKAKIHVHVPEGAVQKDGPSAGITMTTSLLSLALDTPIDPQIAMTGELTLTGKVLRIGGLREKTVAARRAGCKMVVFPEDNMSDWLELPENVKEGIEGRPVRWYSEVFDLIFPKLDREKANKSRIIEDDKSEKEESKKKNDDDE</sequence>
<organism>
    <name type="scientific">Neurospora crassa (strain ATCC 24698 / 74-OR23-1A / CBS 708.71 / DSM 1257 / FGSC 987)</name>
    <dbReference type="NCBI Taxonomy" id="367110"/>
    <lineage>
        <taxon>Eukaryota</taxon>
        <taxon>Fungi</taxon>
        <taxon>Dikarya</taxon>
        <taxon>Ascomycota</taxon>
        <taxon>Pezizomycotina</taxon>
        <taxon>Sordariomycetes</taxon>
        <taxon>Sordariomycetidae</taxon>
        <taxon>Sordariales</taxon>
        <taxon>Sordariaceae</taxon>
        <taxon>Neurospora</taxon>
    </lineage>
</organism>
<feature type="transit peptide" description="Mitochondrion" evidence="1">
    <location>
        <begin position="1"/>
        <end position="31"/>
    </location>
</feature>
<feature type="chain" id="PRO_0000395781" description="Lon protease homolog, mitochondrial">
    <location>
        <begin position="32"/>
        <end position="1107"/>
    </location>
</feature>
<feature type="domain" description="Lon N-terminal" evidence="3">
    <location>
        <begin position="166"/>
        <end position="441"/>
    </location>
</feature>
<feature type="domain" description="Lon proteolytic" evidence="2">
    <location>
        <begin position="891"/>
        <end position="1077"/>
    </location>
</feature>
<feature type="region of interest" description="Disordered" evidence="4">
    <location>
        <begin position="32"/>
        <end position="152"/>
    </location>
</feature>
<feature type="region of interest" description="Disordered" evidence="4">
    <location>
        <begin position="273"/>
        <end position="329"/>
    </location>
</feature>
<feature type="region of interest" description="Disordered" evidence="4">
    <location>
        <begin position="808"/>
        <end position="858"/>
    </location>
</feature>
<feature type="region of interest" description="Disordered" evidence="4">
    <location>
        <begin position="1085"/>
        <end position="1107"/>
    </location>
</feature>
<feature type="compositionally biased region" description="Polar residues" evidence="4">
    <location>
        <begin position="51"/>
        <end position="60"/>
    </location>
</feature>
<feature type="compositionally biased region" description="Basic and acidic residues" evidence="4">
    <location>
        <begin position="80"/>
        <end position="101"/>
    </location>
</feature>
<feature type="compositionally biased region" description="Gly residues" evidence="4">
    <location>
        <begin position="122"/>
        <end position="141"/>
    </location>
</feature>
<feature type="compositionally biased region" description="Basic and acidic residues" evidence="4">
    <location>
        <begin position="142"/>
        <end position="152"/>
    </location>
</feature>
<feature type="compositionally biased region" description="Basic and acidic residues" evidence="4">
    <location>
        <begin position="815"/>
        <end position="831"/>
    </location>
</feature>
<feature type="compositionally biased region" description="Low complexity" evidence="4">
    <location>
        <begin position="832"/>
        <end position="845"/>
    </location>
</feature>
<feature type="compositionally biased region" description="Basic and acidic residues" evidence="4">
    <location>
        <begin position="846"/>
        <end position="856"/>
    </location>
</feature>
<feature type="active site" evidence="1">
    <location>
        <position position="983"/>
    </location>
</feature>
<feature type="active site" evidence="1">
    <location>
        <position position="1026"/>
    </location>
</feature>
<feature type="binding site" evidence="1">
    <location>
        <begin position="594"/>
        <end position="601"/>
    </location>
    <ligand>
        <name>ATP</name>
        <dbReference type="ChEBI" id="CHEBI:30616"/>
    </ligand>
</feature>
<accession>Q7S8C4</accession>
<dbReference type="EC" id="3.4.21.53" evidence="1"/>
<dbReference type="EMBL" id="CM002239">
    <property type="protein sequence ID" value="EAA32590.1"/>
    <property type="molecule type" value="Genomic_DNA"/>
</dbReference>
<dbReference type="RefSeq" id="XP_961826.1">
    <property type="nucleotide sequence ID" value="XM_956733.2"/>
</dbReference>
<dbReference type="SMR" id="Q7S8C4"/>
<dbReference type="FunCoup" id="Q7S8C4">
    <property type="interactions" value="953"/>
</dbReference>
<dbReference type="STRING" id="367110.Q7S8C4"/>
<dbReference type="MEROPS" id="S16.010"/>
<dbReference type="PaxDb" id="5141-EFNCRP00000005097"/>
<dbReference type="EnsemblFungi" id="EAA32590">
    <property type="protein sequence ID" value="EAA32590"/>
    <property type="gene ID" value="NCU05261"/>
</dbReference>
<dbReference type="GeneID" id="3877974"/>
<dbReference type="KEGG" id="ncr:NCU05261"/>
<dbReference type="VEuPathDB" id="FungiDB:NCU05261"/>
<dbReference type="HOGENOM" id="CLU_004109_1_0_1"/>
<dbReference type="InParanoid" id="Q7S8C4"/>
<dbReference type="OMA" id="WLTNIPW"/>
<dbReference type="OrthoDB" id="2411602at2759"/>
<dbReference type="Proteomes" id="UP000001805">
    <property type="component" value="Chromosome 4, Linkage Group IV"/>
</dbReference>
<dbReference type="GO" id="GO:0005759">
    <property type="term" value="C:mitochondrial matrix"/>
    <property type="evidence" value="ECO:0000318"/>
    <property type="project" value="GO_Central"/>
</dbReference>
<dbReference type="GO" id="GO:0005524">
    <property type="term" value="F:ATP binding"/>
    <property type="evidence" value="ECO:0007669"/>
    <property type="project" value="UniProtKB-UniRule"/>
</dbReference>
<dbReference type="GO" id="GO:0016887">
    <property type="term" value="F:ATP hydrolysis activity"/>
    <property type="evidence" value="ECO:0007669"/>
    <property type="project" value="UniProtKB-UniRule"/>
</dbReference>
<dbReference type="GO" id="GO:0004176">
    <property type="term" value="F:ATP-dependent peptidase activity"/>
    <property type="evidence" value="ECO:0000318"/>
    <property type="project" value="GO_Central"/>
</dbReference>
<dbReference type="GO" id="GO:0043565">
    <property type="term" value="F:sequence-specific DNA binding"/>
    <property type="evidence" value="ECO:0007669"/>
    <property type="project" value="UniProtKB-UniRule"/>
</dbReference>
<dbReference type="GO" id="GO:0004252">
    <property type="term" value="F:serine-type endopeptidase activity"/>
    <property type="evidence" value="ECO:0007669"/>
    <property type="project" value="UniProtKB-UniRule"/>
</dbReference>
<dbReference type="GO" id="GO:0003697">
    <property type="term" value="F:single-stranded DNA binding"/>
    <property type="evidence" value="ECO:0000318"/>
    <property type="project" value="GO_Central"/>
</dbReference>
<dbReference type="GO" id="GO:0034599">
    <property type="term" value="P:cellular response to oxidative stress"/>
    <property type="evidence" value="ECO:0007669"/>
    <property type="project" value="UniProtKB-UniRule"/>
</dbReference>
<dbReference type="GO" id="GO:0051131">
    <property type="term" value="P:chaperone-mediated protein complex assembly"/>
    <property type="evidence" value="ECO:0000318"/>
    <property type="project" value="GO_Central"/>
</dbReference>
<dbReference type="GO" id="GO:0035694">
    <property type="term" value="P:mitochondrial protein catabolic process"/>
    <property type="evidence" value="ECO:0007669"/>
    <property type="project" value="EnsemblFungi"/>
</dbReference>
<dbReference type="GO" id="GO:0007005">
    <property type="term" value="P:mitochondrion organization"/>
    <property type="evidence" value="ECO:0000318"/>
    <property type="project" value="GO_Central"/>
</dbReference>
<dbReference type="GO" id="GO:0070407">
    <property type="term" value="P:oxidation-dependent protein catabolic process"/>
    <property type="evidence" value="ECO:0007669"/>
    <property type="project" value="UniProtKB-UniRule"/>
</dbReference>
<dbReference type="GO" id="GO:0006515">
    <property type="term" value="P:protein quality control for misfolded or incompletely synthesized proteins"/>
    <property type="evidence" value="ECO:0000318"/>
    <property type="project" value="GO_Central"/>
</dbReference>
<dbReference type="CDD" id="cd19500">
    <property type="entry name" value="RecA-like_Lon"/>
    <property type="match status" value="1"/>
</dbReference>
<dbReference type="FunFam" id="3.40.50.300:FF:000021">
    <property type="entry name" value="Lon protease homolog"/>
    <property type="match status" value="1"/>
</dbReference>
<dbReference type="FunFam" id="1.10.8.60:FF:000113">
    <property type="entry name" value="Lon protease homolog, mitochondrial"/>
    <property type="match status" value="1"/>
</dbReference>
<dbReference type="FunFam" id="1.20.5.5270:FF:000001">
    <property type="entry name" value="Lon protease homolog, mitochondrial"/>
    <property type="match status" value="1"/>
</dbReference>
<dbReference type="FunFam" id="1.20.58.1480:FF:000003">
    <property type="entry name" value="Lon protease homolog, mitochondrial"/>
    <property type="match status" value="1"/>
</dbReference>
<dbReference type="FunFam" id="2.30.130.40:FF:000006">
    <property type="entry name" value="Lon protease homolog, mitochondrial"/>
    <property type="match status" value="1"/>
</dbReference>
<dbReference type="FunFam" id="3.30.230.10:FF:000015">
    <property type="entry name" value="Lon protease homolog, mitochondrial"/>
    <property type="match status" value="1"/>
</dbReference>
<dbReference type="Gene3D" id="1.10.8.60">
    <property type="match status" value="1"/>
</dbReference>
<dbReference type="Gene3D" id="1.20.5.5270">
    <property type="match status" value="1"/>
</dbReference>
<dbReference type="Gene3D" id="1.20.58.1480">
    <property type="match status" value="1"/>
</dbReference>
<dbReference type="Gene3D" id="3.30.230.10">
    <property type="match status" value="1"/>
</dbReference>
<dbReference type="Gene3D" id="2.30.130.40">
    <property type="entry name" value="LON domain-like"/>
    <property type="match status" value="1"/>
</dbReference>
<dbReference type="Gene3D" id="3.40.50.300">
    <property type="entry name" value="P-loop containing nucleotide triphosphate hydrolases"/>
    <property type="match status" value="1"/>
</dbReference>
<dbReference type="HAMAP" id="MF_03120">
    <property type="entry name" value="lonm_euk"/>
    <property type="match status" value="1"/>
</dbReference>
<dbReference type="InterPro" id="IPR003593">
    <property type="entry name" value="AAA+_ATPase"/>
</dbReference>
<dbReference type="InterPro" id="IPR003959">
    <property type="entry name" value="ATPase_AAA_core"/>
</dbReference>
<dbReference type="InterPro" id="IPR004815">
    <property type="entry name" value="Lon_bac/euk-typ"/>
</dbReference>
<dbReference type="InterPro" id="IPR054594">
    <property type="entry name" value="Lon_lid"/>
</dbReference>
<dbReference type="InterPro" id="IPR008269">
    <property type="entry name" value="Lon_proteolytic"/>
</dbReference>
<dbReference type="InterPro" id="IPR027065">
    <property type="entry name" value="Lon_Prtase"/>
</dbReference>
<dbReference type="InterPro" id="IPR003111">
    <property type="entry name" value="Lon_prtase_N"/>
</dbReference>
<dbReference type="InterPro" id="IPR046336">
    <property type="entry name" value="Lon_prtase_N_sf"/>
</dbReference>
<dbReference type="InterPro" id="IPR027503">
    <property type="entry name" value="Lonm_euk"/>
</dbReference>
<dbReference type="InterPro" id="IPR027417">
    <property type="entry name" value="P-loop_NTPase"/>
</dbReference>
<dbReference type="InterPro" id="IPR008268">
    <property type="entry name" value="Peptidase_S16_AS"/>
</dbReference>
<dbReference type="InterPro" id="IPR015947">
    <property type="entry name" value="PUA-like_sf"/>
</dbReference>
<dbReference type="InterPro" id="IPR020568">
    <property type="entry name" value="Ribosomal_Su5_D2-typ_SF"/>
</dbReference>
<dbReference type="InterPro" id="IPR014721">
    <property type="entry name" value="Ribsml_uS5_D2-typ_fold_subgr"/>
</dbReference>
<dbReference type="NCBIfam" id="TIGR00763">
    <property type="entry name" value="lon"/>
    <property type="match status" value="1"/>
</dbReference>
<dbReference type="PANTHER" id="PTHR43718">
    <property type="entry name" value="LON PROTEASE"/>
    <property type="match status" value="1"/>
</dbReference>
<dbReference type="PANTHER" id="PTHR43718:SF2">
    <property type="entry name" value="LON PROTEASE HOMOLOG, MITOCHONDRIAL"/>
    <property type="match status" value="1"/>
</dbReference>
<dbReference type="Pfam" id="PF00004">
    <property type="entry name" value="AAA"/>
    <property type="match status" value="1"/>
</dbReference>
<dbReference type="Pfam" id="PF05362">
    <property type="entry name" value="Lon_C"/>
    <property type="match status" value="1"/>
</dbReference>
<dbReference type="Pfam" id="PF22667">
    <property type="entry name" value="Lon_lid"/>
    <property type="match status" value="1"/>
</dbReference>
<dbReference type="Pfam" id="PF02190">
    <property type="entry name" value="LON_substr_bdg"/>
    <property type="match status" value="1"/>
</dbReference>
<dbReference type="PRINTS" id="PR00830">
    <property type="entry name" value="ENDOLAPTASE"/>
</dbReference>
<dbReference type="SMART" id="SM00382">
    <property type="entry name" value="AAA"/>
    <property type="match status" value="1"/>
</dbReference>
<dbReference type="SMART" id="SM00464">
    <property type="entry name" value="LON"/>
    <property type="match status" value="1"/>
</dbReference>
<dbReference type="SUPFAM" id="SSF52540">
    <property type="entry name" value="P-loop containing nucleoside triphosphate hydrolases"/>
    <property type="match status" value="1"/>
</dbReference>
<dbReference type="SUPFAM" id="SSF88697">
    <property type="entry name" value="PUA domain-like"/>
    <property type="match status" value="1"/>
</dbReference>
<dbReference type="SUPFAM" id="SSF54211">
    <property type="entry name" value="Ribosomal protein S5 domain 2-like"/>
    <property type="match status" value="1"/>
</dbReference>
<dbReference type="PROSITE" id="PS51787">
    <property type="entry name" value="LON_N"/>
    <property type="match status" value="1"/>
</dbReference>
<dbReference type="PROSITE" id="PS51786">
    <property type="entry name" value="LON_PROTEOLYTIC"/>
    <property type="match status" value="1"/>
</dbReference>
<dbReference type="PROSITE" id="PS01046">
    <property type="entry name" value="LON_SER"/>
    <property type="match status" value="1"/>
</dbReference>
<name>LONM_NEUCR</name>
<evidence type="ECO:0000255" key="1">
    <source>
        <dbReference type="HAMAP-Rule" id="MF_03120"/>
    </source>
</evidence>
<evidence type="ECO:0000255" key="2">
    <source>
        <dbReference type="PROSITE-ProRule" id="PRU01122"/>
    </source>
</evidence>
<evidence type="ECO:0000255" key="3">
    <source>
        <dbReference type="PROSITE-ProRule" id="PRU01123"/>
    </source>
</evidence>
<evidence type="ECO:0000256" key="4">
    <source>
        <dbReference type="SAM" id="MobiDB-lite"/>
    </source>
</evidence>
<proteinExistence type="inferred from homology"/>